<name>GLYA_ANOFW</name>
<dbReference type="EC" id="2.1.2.1" evidence="1"/>
<dbReference type="EMBL" id="CP000922">
    <property type="protein sequence ID" value="ACJ35066.1"/>
    <property type="molecule type" value="Genomic_DNA"/>
</dbReference>
<dbReference type="SMR" id="B7GMG4"/>
<dbReference type="STRING" id="491915.Aflv_2713"/>
<dbReference type="KEGG" id="afl:Aflv_2713"/>
<dbReference type="eggNOG" id="COG0112">
    <property type="taxonomic scope" value="Bacteria"/>
</dbReference>
<dbReference type="HOGENOM" id="CLU_022477_2_1_9"/>
<dbReference type="UniPathway" id="UPA00193"/>
<dbReference type="UniPathway" id="UPA00288">
    <property type="reaction ID" value="UER01023"/>
</dbReference>
<dbReference type="Proteomes" id="UP000000742">
    <property type="component" value="Chromosome"/>
</dbReference>
<dbReference type="GO" id="GO:0005829">
    <property type="term" value="C:cytosol"/>
    <property type="evidence" value="ECO:0007669"/>
    <property type="project" value="TreeGrafter"/>
</dbReference>
<dbReference type="GO" id="GO:0004372">
    <property type="term" value="F:glycine hydroxymethyltransferase activity"/>
    <property type="evidence" value="ECO:0007669"/>
    <property type="project" value="UniProtKB-UniRule"/>
</dbReference>
<dbReference type="GO" id="GO:0030170">
    <property type="term" value="F:pyridoxal phosphate binding"/>
    <property type="evidence" value="ECO:0007669"/>
    <property type="project" value="UniProtKB-UniRule"/>
</dbReference>
<dbReference type="GO" id="GO:0019264">
    <property type="term" value="P:glycine biosynthetic process from serine"/>
    <property type="evidence" value="ECO:0007669"/>
    <property type="project" value="UniProtKB-UniRule"/>
</dbReference>
<dbReference type="GO" id="GO:0035999">
    <property type="term" value="P:tetrahydrofolate interconversion"/>
    <property type="evidence" value="ECO:0007669"/>
    <property type="project" value="UniProtKB-UniRule"/>
</dbReference>
<dbReference type="CDD" id="cd00378">
    <property type="entry name" value="SHMT"/>
    <property type="match status" value="1"/>
</dbReference>
<dbReference type="FunFam" id="3.40.640.10:FF:000001">
    <property type="entry name" value="Serine hydroxymethyltransferase"/>
    <property type="match status" value="1"/>
</dbReference>
<dbReference type="FunFam" id="3.90.1150.10:FF:000003">
    <property type="entry name" value="Serine hydroxymethyltransferase"/>
    <property type="match status" value="1"/>
</dbReference>
<dbReference type="Gene3D" id="3.90.1150.10">
    <property type="entry name" value="Aspartate Aminotransferase, domain 1"/>
    <property type="match status" value="1"/>
</dbReference>
<dbReference type="Gene3D" id="3.40.640.10">
    <property type="entry name" value="Type I PLP-dependent aspartate aminotransferase-like (Major domain)"/>
    <property type="match status" value="1"/>
</dbReference>
<dbReference type="HAMAP" id="MF_00051">
    <property type="entry name" value="SHMT"/>
    <property type="match status" value="1"/>
</dbReference>
<dbReference type="InterPro" id="IPR015424">
    <property type="entry name" value="PyrdxlP-dep_Trfase"/>
</dbReference>
<dbReference type="InterPro" id="IPR015421">
    <property type="entry name" value="PyrdxlP-dep_Trfase_major"/>
</dbReference>
<dbReference type="InterPro" id="IPR015422">
    <property type="entry name" value="PyrdxlP-dep_Trfase_small"/>
</dbReference>
<dbReference type="InterPro" id="IPR001085">
    <property type="entry name" value="Ser_HO-MeTrfase"/>
</dbReference>
<dbReference type="InterPro" id="IPR049943">
    <property type="entry name" value="Ser_HO-MeTrfase-like"/>
</dbReference>
<dbReference type="InterPro" id="IPR019798">
    <property type="entry name" value="Ser_HO-MeTrfase_PLP_BS"/>
</dbReference>
<dbReference type="InterPro" id="IPR039429">
    <property type="entry name" value="SHMT-like_dom"/>
</dbReference>
<dbReference type="NCBIfam" id="NF000586">
    <property type="entry name" value="PRK00011.1"/>
    <property type="match status" value="1"/>
</dbReference>
<dbReference type="PANTHER" id="PTHR11680">
    <property type="entry name" value="SERINE HYDROXYMETHYLTRANSFERASE"/>
    <property type="match status" value="1"/>
</dbReference>
<dbReference type="PANTHER" id="PTHR11680:SF35">
    <property type="entry name" value="SERINE HYDROXYMETHYLTRANSFERASE 1"/>
    <property type="match status" value="1"/>
</dbReference>
<dbReference type="Pfam" id="PF00464">
    <property type="entry name" value="SHMT"/>
    <property type="match status" value="1"/>
</dbReference>
<dbReference type="PIRSF" id="PIRSF000412">
    <property type="entry name" value="SHMT"/>
    <property type="match status" value="1"/>
</dbReference>
<dbReference type="SUPFAM" id="SSF53383">
    <property type="entry name" value="PLP-dependent transferases"/>
    <property type="match status" value="1"/>
</dbReference>
<dbReference type="PROSITE" id="PS00096">
    <property type="entry name" value="SHMT"/>
    <property type="match status" value="1"/>
</dbReference>
<reference key="1">
    <citation type="journal article" date="2008" name="Genome Biol.">
        <title>Encapsulated in silica: genome, proteome and physiology of the thermophilic bacterium Anoxybacillus flavithermus WK1.</title>
        <authorList>
            <person name="Saw J.H."/>
            <person name="Mountain B.W."/>
            <person name="Feng L."/>
            <person name="Omelchenko M.V."/>
            <person name="Hou S."/>
            <person name="Saito J.A."/>
            <person name="Stott M.B."/>
            <person name="Li D."/>
            <person name="Zhao G."/>
            <person name="Wu J."/>
            <person name="Galperin M.Y."/>
            <person name="Koonin E.V."/>
            <person name="Makarova K.S."/>
            <person name="Wolf Y.I."/>
            <person name="Rigden D.J."/>
            <person name="Dunfield P.F."/>
            <person name="Wang L."/>
            <person name="Alam M."/>
        </authorList>
    </citation>
    <scope>NUCLEOTIDE SEQUENCE [LARGE SCALE GENOMIC DNA]</scope>
    <source>
        <strain>DSM 21510 / WK1</strain>
    </source>
</reference>
<organism>
    <name type="scientific">Anoxybacillus flavithermus (strain DSM 21510 / WK1)</name>
    <dbReference type="NCBI Taxonomy" id="491915"/>
    <lineage>
        <taxon>Bacteria</taxon>
        <taxon>Bacillati</taxon>
        <taxon>Bacillota</taxon>
        <taxon>Bacilli</taxon>
        <taxon>Bacillales</taxon>
        <taxon>Anoxybacillaceae</taxon>
        <taxon>Anoxybacillus</taxon>
    </lineage>
</organism>
<evidence type="ECO:0000255" key="1">
    <source>
        <dbReference type="HAMAP-Rule" id="MF_00051"/>
    </source>
</evidence>
<feature type="chain" id="PRO_0000369898" description="Serine hydroxymethyltransferase">
    <location>
        <begin position="1"/>
        <end position="413"/>
    </location>
</feature>
<feature type="binding site" evidence="1">
    <location>
        <position position="119"/>
    </location>
    <ligand>
        <name>(6S)-5,6,7,8-tetrahydrofolate</name>
        <dbReference type="ChEBI" id="CHEBI:57453"/>
    </ligand>
</feature>
<feature type="binding site" evidence="1">
    <location>
        <begin position="123"/>
        <end position="125"/>
    </location>
    <ligand>
        <name>(6S)-5,6,7,8-tetrahydrofolate</name>
        <dbReference type="ChEBI" id="CHEBI:57453"/>
    </ligand>
</feature>
<feature type="binding site" evidence="1">
    <location>
        <begin position="351"/>
        <end position="353"/>
    </location>
    <ligand>
        <name>(6S)-5,6,7,8-tetrahydrofolate</name>
        <dbReference type="ChEBI" id="CHEBI:57453"/>
    </ligand>
</feature>
<feature type="site" description="Plays an important role in substrate specificity" evidence="1">
    <location>
        <position position="227"/>
    </location>
</feature>
<feature type="modified residue" description="N6-(pyridoxal phosphate)lysine" evidence="1">
    <location>
        <position position="228"/>
    </location>
</feature>
<gene>
    <name evidence="1" type="primary">glyA</name>
    <name type="ordered locus">Aflv_2713</name>
</gene>
<proteinExistence type="inferred from homology"/>
<accession>B7GMG4</accession>
<keyword id="KW-0028">Amino-acid biosynthesis</keyword>
<keyword id="KW-0963">Cytoplasm</keyword>
<keyword id="KW-0554">One-carbon metabolism</keyword>
<keyword id="KW-0663">Pyridoxal phosphate</keyword>
<keyword id="KW-0808">Transferase</keyword>
<sequence>MSMSRLSQQDPQVFQAIQDELKRQQTKIELIASENFVSEAVMEAQGSVLTNKYAEGYPGRRYYGGCEHVDVVEELARERAKQLFGAEHANVQPHSGAQANMAVYFTILQHGDTVLGMNLSHGGHLTHGSPVNFSGIQYNFIEYGVDPETHRINYDDVREKALKHKPKLIVAGASAYPRTIDFAKFREIADEVGAYFMVDMAHIAGLVAAGLHPNPVPYAHFVTTTTHKTLRGPRGGMILCQEQFAKQIDKAIFPGIQGGPLMHVIAAKAVALGEALQDDFKTYAQNIVNNAKRLAEALVAEGFTLVSGGTDNHLLLIDLRSIGLTGKVAEKVLDEIGITVNKNTIPYDPESPFVTSGIRIGTAAVTSRGFGLEEMDEIARIISIALKHKDDEQKLDEARRRVAALTEKFPLYV</sequence>
<comment type="function">
    <text evidence="1">Catalyzes the reversible interconversion of serine and glycine with tetrahydrofolate (THF) serving as the one-carbon carrier. This reaction serves as the major source of one-carbon groups required for the biosynthesis of purines, thymidylate, methionine, and other important biomolecules. Also exhibits THF-independent aldolase activity toward beta-hydroxyamino acids, producing glycine and aldehydes, via a retro-aldol mechanism.</text>
</comment>
<comment type="catalytic activity">
    <reaction evidence="1">
        <text>(6R)-5,10-methylene-5,6,7,8-tetrahydrofolate + glycine + H2O = (6S)-5,6,7,8-tetrahydrofolate + L-serine</text>
        <dbReference type="Rhea" id="RHEA:15481"/>
        <dbReference type="ChEBI" id="CHEBI:15377"/>
        <dbReference type="ChEBI" id="CHEBI:15636"/>
        <dbReference type="ChEBI" id="CHEBI:33384"/>
        <dbReference type="ChEBI" id="CHEBI:57305"/>
        <dbReference type="ChEBI" id="CHEBI:57453"/>
        <dbReference type="EC" id="2.1.2.1"/>
    </reaction>
</comment>
<comment type="cofactor">
    <cofactor evidence="1">
        <name>pyridoxal 5'-phosphate</name>
        <dbReference type="ChEBI" id="CHEBI:597326"/>
    </cofactor>
</comment>
<comment type="pathway">
    <text evidence="1">One-carbon metabolism; tetrahydrofolate interconversion.</text>
</comment>
<comment type="pathway">
    <text evidence="1">Amino-acid biosynthesis; glycine biosynthesis; glycine from L-serine: step 1/1.</text>
</comment>
<comment type="subunit">
    <text evidence="1">Homodimer.</text>
</comment>
<comment type="subcellular location">
    <subcellularLocation>
        <location evidence="1">Cytoplasm</location>
    </subcellularLocation>
</comment>
<comment type="similarity">
    <text evidence="1">Belongs to the SHMT family.</text>
</comment>
<protein>
    <recommendedName>
        <fullName evidence="1">Serine hydroxymethyltransferase</fullName>
        <shortName evidence="1">SHMT</shortName>
        <shortName evidence="1">Serine methylase</shortName>
        <ecNumber evidence="1">2.1.2.1</ecNumber>
    </recommendedName>
</protein>